<feature type="signal peptide" evidence="4">
    <location>
        <begin position="1"/>
        <end position="22"/>
    </location>
</feature>
<feature type="chain" id="PRO_0000235192" description="Agouti-signaling protein">
    <location>
        <begin position="23"/>
        <end position="132"/>
    </location>
</feature>
<feature type="domain" description="Agouti" evidence="5">
    <location>
        <begin position="93"/>
        <end position="132"/>
    </location>
</feature>
<feature type="region of interest" description="Disordered" evidence="6">
    <location>
        <begin position="62"/>
        <end position="85"/>
    </location>
</feature>
<feature type="compositionally biased region" description="Basic and acidic residues" evidence="6">
    <location>
        <begin position="63"/>
        <end position="78"/>
    </location>
</feature>
<feature type="glycosylation site" description="N-linked (GlcNAc...) asparagine" evidence="4">
    <location>
        <position position="39"/>
    </location>
</feature>
<feature type="disulfide bond" evidence="5">
    <location>
        <begin position="93"/>
        <end position="108"/>
    </location>
</feature>
<feature type="disulfide bond" evidence="5">
    <location>
        <begin position="100"/>
        <end position="114"/>
    </location>
</feature>
<feature type="disulfide bond" evidence="5">
    <location>
        <begin position="107"/>
        <end position="125"/>
    </location>
</feature>
<feature type="disulfide bond" evidence="5">
    <location>
        <begin position="111"/>
        <end position="132"/>
    </location>
</feature>
<feature type="disulfide bond" evidence="5">
    <location>
        <begin position="116"/>
        <end position="123"/>
    </location>
</feature>
<organism>
    <name type="scientific">Pongo pygmaeus</name>
    <name type="common">Bornean orangutan</name>
    <dbReference type="NCBI Taxonomy" id="9600"/>
    <lineage>
        <taxon>Eukaryota</taxon>
        <taxon>Metazoa</taxon>
        <taxon>Chordata</taxon>
        <taxon>Craniata</taxon>
        <taxon>Vertebrata</taxon>
        <taxon>Euteleostomi</taxon>
        <taxon>Mammalia</taxon>
        <taxon>Eutheria</taxon>
        <taxon>Euarchontoglires</taxon>
        <taxon>Primates</taxon>
        <taxon>Haplorrhini</taxon>
        <taxon>Catarrhini</taxon>
        <taxon>Hominidae</taxon>
        <taxon>Pongo</taxon>
    </lineage>
</organism>
<sequence>MDVTRLLLATLLVFLCFFTADSHLPPEEKLRDDRSLRSNSSVNLLDFPSVSIVALNKKSKQISRKEAEKKRSSKKEASMKTVARPRTPLSAPCVATRNSCKPPAPACCDPCASCQCRFFRSACSCRVLSLNC</sequence>
<name>ASIP_PONPY</name>
<proteinExistence type="inferred from homology"/>
<comment type="function">
    <text evidence="3">Involved in the regulation of melanogenesis. The binding of ASP to MC1R precludes alpha-MSH initiated signaling and thus blocks production of cAMP, leading to a down-regulation of eumelanogenesis (brown/black pigment) and thus increasing synthesis of pheomelanin (yellow/red pigment) (By similarity).</text>
</comment>
<comment type="subcellular location">
    <subcellularLocation>
        <location evidence="2">Secreted</location>
    </subcellularLocation>
</comment>
<comment type="domain">
    <text evidence="1">The presence of a 'disulfide through disulfide knot' structurally defines this protein as a knottin.</text>
</comment>
<keyword id="KW-1015">Disulfide bond</keyword>
<keyword id="KW-0325">Glycoprotein</keyword>
<keyword id="KW-0960">Knottin</keyword>
<keyword id="KW-0964">Secreted</keyword>
<keyword id="KW-0732">Signal</keyword>
<protein>
    <recommendedName>
        <fullName>Agouti-signaling protein</fullName>
        <shortName>ASP</shortName>
    </recommendedName>
    <alternativeName>
        <fullName>Agouti switch protein</fullName>
    </alternativeName>
</protein>
<reference key="1">
    <citation type="journal article" date="2006" name="Genome Res.">
        <title>Alu-mediated 100-kb deletion in the primate genome: the loss of the agouti signaling protein gene in the lesser apes.</title>
        <authorList>
            <person name="Nakayama K."/>
            <person name="Ishida T."/>
        </authorList>
    </citation>
    <scope>NUCLEOTIDE SEQUENCE [GENOMIC DNA]</scope>
</reference>
<reference key="2">
    <citation type="journal article" date="2006" name="Mamm. Genome">
        <title>Investigation of the role of the agouti signaling protein gene (ASIP) in coat color evolution in primates.</title>
        <authorList>
            <person name="Mundy N.I."/>
            <person name="Kelly J."/>
        </authorList>
    </citation>
    <scope>NUCLEOTIDE SEQUENCE [GENOMIC DNA]</scope>
</reference>
<accession>Q1XGV4</accession>
<accession>A1YL65</accession>
<dbReference type="EMBL" id="AB236872">
    <property type="protein sequence ID" value="BAE93020.1"/>
    <property type="molecule type" value="Genomic_DNA"/>
</dbReference>
<dbReference type="EMBL" id="EF094482">
    <property type="protein sequence ID" value="ABL84280.1"/>
    <property type="molecule type" value="Genomic_DNA"/>
</dbReference>
<dbReference type="RefSeq" id="XP_054323479.1">
    <property type="nucleotide sequence ID" value="XM_054467504.2"/>
</dbReference>
<dbReference type="RefSeq" id="XP_054323480.1">
    <property type="nucleotide sequence ID" value="XM_054467505.2"/>
</dbReference>
<dbReference type="GlyCosmos" id="Q1XGV4">
    <property type="glycosylation" value="1 site, No reported glycans"/>
</dbReference>
<dbReference type="GeneID" id="129021699"/>
<dbReference type="GO" id="GO:0005615">
    <property type="term" value="C:extracellular space"/>
    <property type="evidence" value="ECO:0000250"/>
    <property type="project" value="UniProtKB"/>
</dbReference>
<dbReference type="GO" id="GO:0031779">
    <property type="term" value="F:melanocortin receptor binding"/>
    <property type="evidence" value="ECO:0007669"/>
    <property type="project" value="TreeGrafter"/>
</dbReference>
<dbReference type="GO" id="GO:0005184">
    <property type="term" value="F:neuropeptide hormone activity"/>
    <property type="evidence" value="ECO:0007669"/>
    <property type="project" value="TreeGrafter"/>
</dbReference>
<dbReference type="GO" id="GO:0009755">
    <property type="term" value="P:hormone-mediated signaling pathway"/>
    <property type="evidence" value="ECO:0007669"/>
    <property type="project" value="InterPro"/>
</dbReference>
<dbReference type="GO" id="GO:0042438">
    <property type="term" value="P:melanin biosynthetic process"/>
    <property type="evidence" value="ECO:0000250"/>
    <property type="project" value="UniProtKB"/>
</dbReference>
<dbReference type="GO" id="GO:0032438">
    <property type="term" value="P:melanosome organization"/>
    <property type="evidence" value="ECO:0007669"/>
    <property type="project" value="TreeGrafter"/>
</dbReference>
<dbReference type="FunFam" id="4.10.760.10:FF:000002">
    <property type="entry name" value="Agouti-signaling protein"/>
    <property type="match status" value="1"/>
</dbReference>
<dbReference type="Gene3D" id="4.10.760.10">
    <property type="entry name" value="Agouti domain"/>
    <property type="match status" value="1"/>
</dbReference>
<dbReference type="InterPro" id="IPR007733">
    <property type="entry name" value="Agouti"/>
</dbReference>
<dbReference type="InterPro" id="IPR027300">
    <property type="entry name" value="Agouti_dom"/>
</dbReference>
<dbReference type="InterPro" id="IPR036836">
    <property type="entry name" value="Agouti_dom_sf"/>
</dbReference>
<dbReference type="PANTHER" id="PTHR16551">
    <property type="entry name" value="AGOUTI RELATED"/>
    <property type="match status" value="1"/>
</dbReference>
<dbReference type="PANTHER" id="PTHR16551:SF1">
    <property type="entry name" value="AGOUTI-SIGNALING PROTEIN"/>
    <property type="match status" value="1"/>
</dbReference>
<dbReference type="Pfam" id="PF05039">
    <property type="entry name" value="Agouti"/>
    <property type="match status" value="1"/>
</dbReference>
<dbReference type="SMART" id="SM00792">
    <property type="entry name" value="Agouti"/>
    <property type="match status" value="1"/>
</dbReference>
<dbReference type="SUPFAM" id="SSF57055">
    <property type="entry name" value="Agouti-related protein"/>
    <property type="match status" value="1"/>
</dbReference>
<dbReference type="PROSITE" id="PS60024">
    <property type="entry name" value="AGOUTI_1"/>
    <property type="match status" value="1"/>
</dbReference>
<dbReference type="PROSITE" id="PS51150">
    <property type="entry name" value="AGOUTI_2"/>
    <property type="match status" value="1"/>
</dbReference>
<evidence type="ECO:0000250" key="1"/>
<evidence type="ECO:0000250" key="2">
    <source>
        <dbReference type="UniProtKB" id="P42127"/>
    </source>
</evidence>
<evidence type="ECO:0000250" key="3">
    <source>
        <dbReference type="UniProtKB" id="Q03288"/>
    </source>
</evidence>
<evidence type="ECO:0000255" key="4"/>
<evidence type="ECO:0000255" key="5">
    <source>
        <dbReference type="PROSITE-ProRule" id="PRU00494"/>
    </source>
</evidence>
<evidence type="ECO:0000256" key="6">
    <source>
        <dbReference type="SAM" id="MobiDB-lite"/>
    </source>
</evidence>
<gene>
    <name type="primary">ASIP</name>
</gene>